<comment type="function">
    <text evidence="1">Releases the supercoiling and torsional tension of DNA, which is introduced during the DNA replication and transcription, by transiently cleaving and rejoining one strand of the DNA duplex. Introduces a single-strand break via transesterification at a target site in duplex DNA. The scissile phosphodiester is attacked by the catalytic tyrosine of the enzyme, resulting in the formation of a DNA-(5'-phosphotyrosyl)-enzyme intermediate and the expulsion of a 3'-OH DNA strand. The free DNA strand then undergoes passage around the unbroken strand, thus removing DNA supercoils. Finally, in the religation step, the DNA 3'-OH attacks the covalent intermediate to expel the active-site tyrosine and restore the DNA phosphodiester backbone.</text>
</comment>
<comment type="catalytic activity">
    <reaction evidence="1">
        <text>ATP-independent breakage of single-stranded DNA, followed by passage and rejoining.</text>
        <dbReference type="EC" id="5.6.2.1"/>
    </reaction>
</comment>
<comment type="cofactor">
    <cofactor evidence="1">
        <name>Mg(2+)</name>
        <dbReference type="ChEBI" id="CHEBI:18420"/>
    </cofactor>
    <text evidence="1">Binds two Mg(2+) per subunit.</text>
</comment>
<comment type="similarity">
    <text evidence="1 2">Belongs to the type IA topoisomerase family.</text>
</comment>
<evidence type="ECO:0000255" key="1">
    <source>
        <dbReference type="HAMAP-Rule" id="MF_00953"/>
    </source>
</evidence>
<evidence type="ECO:0000255" key="2">
    <source>
        <dbReference type="PROSITE-ProRule" id="PRU01383"/>
    </source>
</evidence>
<evidence type="ECO:0000256" key="3">
    <source>
        <dbReference type="SAM" id="MobiDB-lite"/>
    </source>
</evidence>
<reference key="1">
    <citation type="journal article" date="1995" name="Science">
        <title>Whole-genome random sequencing and assembly of Haemophilus influenzae Rd.</title>
        <authorList>
            <person name="Fleischmann R.D."/>
            <person name="Adams M.D."/>
            <person name="White O."/>
            <person name="Clayton R.A."/>
            <person name="Kirkness E.F."/>
            <person name="Kerlavage A.R."/>
            <person name="Bult C.J."/>
            <person name="Tomb J.-F."/>
            <person name="Dougherty B.A."/>
            <person name="Merrick J.M."/>
            <person name="McKenney K."/>
            <person name="Sutton G.G."/>
            <person name="FitzHugh W."/>
            <person name="Fields C.A."/>
            <person name="Gocayne J.D."/>
            <person name="Scott J.D."/>
            <person name="Shirley R."/>
            <person name="Liu L.-I."/>
            <person name="Glodek A."/>
            <person name="Kelley J.M."/>
            <person name="Weidman J.F."/>
            <person name="Phillips C.A."/>
            <person name="Spriggs T."/>
            <person name="Hedblom E."/>
            <person name="Cotton M.D."/>
            <person name="Utterback T.R."/>
            <person name="Hanna M.C."/>
            <person name="Nguyen D.T."/>
            <person name="Saudek D.M."/>
            <person name="Brandon R.C."/>
            <person name="Fine L.D."/>
            <person name="Fritchman J.L."/>
            <person name="Fuhrmann J.L."/>
            <person name="Geoghagen N.S.M."/>
            <person name="Gnehm C.L."/>
            <person name="McDonald L.A."/>
            <person name="Small K.V."/>
            <person name="Fraser C.M."/>
            <person name="Smith H.O."/>
            <person name="Venter J.C."/>
        </authorList>
    </citation>
    <scope>NUCLEOTIDE SEQUENCE [LARGE SCALE GENOMIC DNA]</scope>
    <source>
        <strain>ATCC 51907 / DSM 11121 / KW20 / Rd</strain>
    </source>
</reference>
<name>TOP3_HAEIN</name>
<proteinExistence type="inferred from homology"/>
<keyword id="KW-0238">DNA-binding</keyword>
<keyword id="KW-0413">Isomerase</keyword>
<keyword id="KW-0460">Magnesium</keyword>
<keyword id="KW-0479">Metal-binding</keyword>
<keyword id="KW-1185">Reference proteome</keyword>
<keyword id="KW-0799">Topoisomerase</keyword>
<protein>
    <recommendedName>
        <fullName evidence="1">DNA topoisomerase 3</fullName>
        <ecNumber evidence="1">5.6.2.1</ecNumber>
    </recommendedName>
    <alternativeName>
        <fullName evidence="1">DNA topoisomerase III</fullName>
    </alternativeName>
</protein>
<organism>
    <name type="scientific">Haemophilus influenzae (strain ATCC 51907 / DSM 11121 / KW20 / Rd)</name>
    <dbReference type="NCBI Taxonomy" id="71421"/>
    <lineage>
        <taxon>Bacteria</taxon>
        <taxon>Pseudomonadati</taxon>
        <taxon>Pseudomonadota</taxon>
        <taxon>Gammaproteobacteria</taxon>
        <taxon>Pasteurellales</taxon>
        <taxon>Pasteurellaceae</taxon>
        <taxon>Haemophilus</taxon>
    </lineage>
</organism>
<sequence>MRLFIAEKPSLARAIADVLPKPHQRGDGFIKCGDNDVVTWCVGHLLEQAEPDAYDPKFKQWRLEHLPIIPEKWQLLPRKEVKKQLSVVEKLIHQADTLVNAGDPDREGQLLVDEVFSYANLSAEKRDKILRCLISDLNPSAVEKAVKKLQPNRNFIPLATSALARARADWLYGINMTRAYTIRGRQTGYDGVLSVGRVQTPVLGLIVRRDLEIEHFQPKDFFEVQAWVNPESKEEKTPEKSTALFSALWQPSKACEDYQDDDGRVLSKGLAEKVVKRITNQPAEVTEYKDVREKETAPLPYSLSALQIDAAKRFGMSAQAVLDTCQRLYETHRLITYPRSDCRYLPEEHFAERHNVLNAISTHCEAYQVLPNVILTEQRNRCWNDKKVEAHHAIIPTAKNRPVNLTQEERNIYSLIARQYLMQFCPDAEYRKSKITLNIAGGTFIAQARNLQTAGWKELLGKEDDTENQEPLLPIVKKGQILHCERGEVMSKKTQPPKPFTDATLLSAMTGIARFVQDKELKKILRETDGLGTEATRAGIIELLFKRGFLTKKGRNIHSTETGRILIQALPNIATQPDMTAHWESQLTDISQKQATYQQFMHNLNQILPDLVRFVDLNALRQLSRIKMIKSDRAKPKSAVKKSSKSNGETD</sequence>
<gene>
    <name evidence="1" type="primary">topB</name>
    <name type="ordered locus">HI_0444</name>
</gene>
<accession>P43704</accession>
<dbReference type="EC" id="5.6.2.1" evidence="1"/>
<dbReference type="EMBL" id="L42023">
    <property type="protein sequence ID" value="AAC22103.1"/>
    <property type="molecule type" value="Genomic_DNA"/>
</dbReference>
<dbReference type="PIR" id="G64068">
    <property type="entry name" value="G64068"/>
</dbReference>
<dbReference type="RefSeq" id="NP_438605.1">
    <property type="nucleotide sequence ID" value="NC_000907.1"/>
</dbReference>
<dbReference type="SMR" id="P43704"/>
<dbReference type="STRING" id="71421.HI_0444"/>
<dbReference type="EnsemblBacteria" id="AAC22103">
    <property type="protein sequence ID" value="AAC22103"/>
    <property type="gene ID" value="HI_0444"/>
</dbReference>
<dbReference type="KEGG" id="hin:HI_0444"/>
<dbReference type="PATRIC" id="fig|71421.8.peg.464"/>
<dbReference type="eggNOG" id="COG0550">
    <property type="taxonomic scope" value="Bacteria"/>
</dbReference>
<dbReference type="HOGENOM" id="CLU_002929_5_2_6"/>
<dbReference type="OrthoDB" id="9803554at2"/>
<dbReference type="PhylomeDB" id="P43704"/>
<dbReference type="BioCyc" id="HINF71421:G1GJ1-459-MONOMER"/>
<dbReference type="Proteomes" id="UP000000579">
    <property type="component" value="Chromosome"/>
</dbReference>
<dbReference type="GO" id="GO:0043597">
    <property type="term" value="C:cytoplasmic replication fork"/>
    <property type="evidence" value="ECO:0000318"/>
    <property type="project" value="GO_Central"/>
</dbReference>
<dbReference type="GO" id="GO:0003677">
    <property type="term" value="F:DNA binding"/>
    <property type="evidence" value="ECO:0007669"/>
    <property type="project" value="UniProtKB-KW"/>
</dbReference>
<dbReference type="GO" id="GO:0003917">
    <property type="term" value="F:DNA topoisomerase type I (single strand cut, ATP-independent) activity"/>
    <property type="evidence" value="ECO:0000318"/>
    <property type="project" value="GO_Central"/>
</dbReference>
<dbReference type="GO" id="GO:0000287">
    <property type="term" value="F:magnesium ion binding"/>
    <property type="evidence" value="ECO:0007669"/>
    <property type="project" value="UniProtKB-UniRule"/>
</dbReference>
<dbReference type="GO" id="GO:0006310">
    <property type="term" value="P:DNA recombination"/>
    <property type="evidence" value="ECO:0000318"/>
    <property type="project" value="GO_Central"/>
</dbReference>
<dbReference type="GO" id="GO:0006281">
    <property type="term" value="P:DNA repair"/>
    <property type="evidence" value="ECO:0000318"/>
    <property type="project" value="GO_Central"/>
</dbReference>
<dbReference type="GO" id="GO:0006265">
    <property type="term" value="P:DNA topological change"/>
    <property type="evidence" value="ECO:0000318"/>
    <property type="project" value="GO_Central"/>
</dbReference>
<dbReference type="CDD" id="cd00186">
    <property type="entry name" value="TOP1Ac"/>
    <property type="match status" value="1"/>
</dbReference>
<dbReference type="CDD" id="cd03362">
    <property type="entry name" value="TOPRIM_TopoIA_TopoIII"/>
    <property type="match status" value="1"/>
</dbReference>
<dbReference type="FunFam" id="1.10.290.10:FF:000004">
    <property type="entry name" value="DNA topoisomerase 3"/>
    <property type="match status" value="1"/>
</dbReference>
<dbReference type="FunFam" id="3.40.50.140:FF:000004">
    <property type="entry name" value="DNA topoisomerase 3"/>
    <property type="match status" value="1"/>
</dbReference>
<dbReference type="Gene3D" id="3.40.50.140">
    <property type="match status" value="1"/>
</dbReference>
<dbReference type="Gene3D" id="1.10.460.10">
    <property type="entry name" value="Topoisomerase I, domain 2"/>
    <property type="match status" value="1"/>
</dbReference>
<dbReference type="Gene3D" id="2.70.20.10">
    <property type="entry name" value="Topoisomerase I, domain 3"/>
    <property type="match status" value="1"/>
</dbReference>
<dbReference type="Gene3D" id="1.10.290.10">
    <property type="entry name" value="Topoisomerase I, domain 4"/>
    <property type="match status" value="1"/>
</dbReference>
<dbReference type="HAMAP" id="MF_00953">
    <property type="entry name" value="Topoisom_3_prok"/>
    <property type="match status" value="1"/>
</dbReference>
<dbReference type="InterPro" id="IPR000380">
    <property type="entry name" value="Topo_IA"/>
</dbReference>
<dbReference type="InterPro" id="IPR003601">
    <property type="entry name" value="Topo_IA_2"/>
</dbReference>
<dbReference type="InterPro" id="IPR023406">
    <property type="entry name" value="Topo_IA_AS"/>
</dbReference>
<dbReference type="InterPro" id="IPR013497">
    <property type="entry name" value="Topo_IA_cen"/>
</dbReference>
<dbReference type="InterPro" id="IPR013824">
    <property type="entry name" value="Topo_IA_cen_sub1"/>
</dbReference>
<dbReference type="InterPro" id="IPR013825">
    <property type="entry name" value="Topo_IA_cen_sub2"/>
</dbReference>
<dbReference type="InterPro" id="IPR013826">
    <property type="entry name" value="Topo_IA_cen_sub3"/>
</dbReference>
<dbReference type="InterPro" id="IPR023405">
    <property type="entry name" value="Topo_IA_core_domain"/>
</dbReference>
<dbReference type="InterPro" id="IPR003602">
    <property type="entry name" value="Topo_IA_DNA-bd_dom"/>
</dbReference>
<dbReference type="InterPro" id="IPR005738">
    <property type="entry name" value="TopoIII"/>
</dbReference>
<dbReference type="InterPro" id="IPR006171">
    <property type="entry name" value="TOPRIM_dom"/>
</dbReference>
<dbReference type="InterPro" id="IPR034144">
    <property type="entry name" value="TOPRIM_TopoIII"/>
</dbReference>
<dbReference type="NCBIfam" id="NF005829">
    <property type="entry name" value="PRK07726.1"/>
    <property type="match status" value="1"/>
</dbReference>
<dbReference type="NCBIfam" id="TIGR01056">
    <property type="entry name" value="topB"/>
    <property type="match status" value="1"/>
</dbReference>
<dbReference type="PANTHER" id="PTHR11390:SF21">
    <property type="entry name" value="DNA TOPOISOMERASE 3-ALPHA"/>
    <property type="match status" value="1"/>
</dbReference>
<dbReference type="PANTHER" id="PTHR11390">
    <property type="entry name" value="PROKARYOTIC DNA TOPOISOMERASE"/>
    <property type="match status" value="1"/>
</dbReference>
<dbReference type="Pfam" id="PF01131">
    <property type="entry name" value="Topoisom_bac"/>
    <property type="match status" value="1"/>
</dbReference>
<dbReference type="Pfam" id="PF01751">
    <property type="entry name" value="Toprim"/>
    <property type="match status" value="1"/>
</dbReference>
<dbReference type="PRINTS" id="PR00417">
    <property type="entry name" value="PRTPISMRASEI"/>
</dbReference>
<dbReference type="SMART" id="SM00437">
    <property type="entry name" value="TOP1Ac"/>
    <property type="match status" value="1"/>
</dbReference>
<dbReference type="SMART" id="SM00436">
    <property type="entry name" value="TOP1Bc"/>
    <property type="match status" value="1"/>
</dbReference>
<dbReference type="SMART" id="SM00493">
    <property type="entry name" value="TOPRIM"/>
    <property type="match status" value="1"/>
</dbReference>
<dbReference type="SUPFAM" id="SSF56712">
    <property type="entry name" value="Prokaryotic type I DNA topoisomerase"/>
    <property type="match status" value="1"/>
</dbReference>
<dbReference type="PROSITE" id="PS00396">
    <property type="entry name" value="TOPO_IA_1"/>
    <property type="match status" value="1"/>
</dbReference>
<dbReference type="PROSITE" id="PS52039">
    <property type="entry name" value="TOPO_IA_2"/>
    <property type="match status" value="1"/>
</dbReference>
<dbReference type="PROSITE" id="PS50880">
    <property type="entry name" value="TOPRIM"/>
    <property type="match status" value="1"/>
</dbReference>
<feature type="chain" id="PRO_0000145187" description="DNA topoisomerase 3">
    <location>
        <begin position="1"/>
        <end position="651"/>
    </location>
</feature>
<feature type="domain" description="Toprim" evidence="1">
    <location>
        <begin position="1"/>
        <end position="134"/>
    </location>
</feature>
<feature type="domain" description="Topo IA-type catalytic" evidence="2">
    <location>
        <begin position="155"/>
        <end position="612"/>
    </location>
</feature>
<feature type="region of interest" description="Interaction with DNA" evidence="1">
    <location>
        <begin position="194"/>
        <end position="199"/>
    </location>
</feature>
<feature type="region of interest" description="Disordered" evidence="3">
    <location>
        <begin position="631"/>
        <end position="651"/>
    </location>
</feature>
<feature type="active site" description="O-(5'-phospho-DNA)-tyrosine intermediate" evidence="2">
    <location>
        <position position="337"/>
    </location>
</feature>
<feature type="binding site" evidence="1">
    <location>
        <position position="7"/>
    </location>
    <ligand>
        <name>Mg(2+)</name>
        <dbReference type="ChEBI" id="CHEBI:18420"/>
        <label>1</label>
        <note>catalytic</note>
    </ligand>
</feature>
<feature type="binding site" evidence="1">
    <location>
        <position position="103"/>
    </location>
    <ligand>
        <name>Mg(2+)</name>
        <dbReference type="ChEBI" id="CHEBI:18420"/>
        <label>1</label>
        <note>catalytic</note>
    </ligand>
</feature>
<feature type="binding site" evidence="1">
    <location>
        <position position="103"/>
    </location>
    <ligand>
        <name>Mg(2+)</name>
        <dbReference type="ChEBI" id="CHEBI:18420"/>
        <label>2</label>
    </ligand>
</feature>
<feature type="binding site" evidence="1">
    <location>
        <position position="105"/>
    </location>
    <ligand>
        <name>Mg(2+)</name>
        <dbReference type="ChEBI" id="CHEBI:18420"/>
        <label>2</label>
    </ligand>
</feature>
<feature type="site" description="Interaction with DNA" evidence="1">
    <location>
        <position position="61"/>
    </location>
</feature>
<feature type="site" description="Interaction with DNA" evidence="1">
    <location>
        <position position="170"/>
    </location>
</feature>
<feature type="site" description="Interaction with DNA" evidence="1">
    <location>
        <position position="178"/>
    </location>
</feature>
<feature type="site" description="Interaction with DNA" evidence="1">
    <location>
        <position position="185"/>
    </location>
</feature>
<feature type="site" description="Interaction with DNA" evidence="1">
    <location>
        <position position="339"/>
    </location>
</feature>